<gene>
    <name evidence="1" type="primary">thiG</name>
    <name type="ordered locus">Ent638_0203</name>
</gene>
<feature type="chain" id="PRO_1000060251" description="Thiazole synthase">
    <location>
        <begin position="1"/>
        <end position="256"/>
    </location>
</feature>
<feature type="active site" description="Schiff-base intermediate with DXP" evidence="1">
    <location>
        <position position="95"/>
    </location>
</feature>
<feature type="binding site" evidence="1">
    <location>
        <position position="156"/>
    </location>
    <ligand>
        <name>1-deoxy-D-xylulose 5-phosphate</name>
        <dbReference type="ChEBI" id="CHEBI:57792"/>
    </ligand>
</feature>
<feature type="binding site" evidence="1">
    <location>
        <begin position="182"/>
        <end position="183"/>
    </location>
    <ligand>
        <name>1-deoxy-D-xylulose 5-phosphate</name>
        <dbReference type="ChEBI" id="CHEBI:57792"/>
    </ligand>
</feature>
<feature type="binding site" evidence="1">
    <location>
        <begin position="204"/>
        <end position="205"/>
    </location>
    <ligand>
        <name>1-deoxy-D-xylulose 5-phosphate</name>
        <dbReference type="ChEBI" id="CHEBI:57792"/>
    </ligand>
</feature>
<accession>A4W5B3</accession>
<comment type="function">
    <text evidence="1">Catalyzes the rearrangement of 1-deoxy-D-xylulose 5-phosphate (DXP) to produce the thiazole phosphate moiety of thiamine. Sulfur is provided by the thiocarboxylate moiety of the carrier protein ThiS. In vitro, sulfur can be provided by H(2)S.</text>
</comment>
<comment type="catalytic activity">
    <reaction evidence="1">
        <text>[ThiS sulfur-carrier protein]-C-terminal-Gly-aminoethanethioate + 2-iminoacetate + 1-deoxy-D-xylulose 5-phosphate = [ThiS sulfur-carrier protein]-C-terminal Gly-Gly + 2-[(2R,5Z)-2-carboxy-4-methylthiazol-5(2H)-ylidene]ethyl phosphate + 2 H2O + H(+)</text>
        <dbReference type="Rhea" id="RHEA:26297"/>
        <dbReference type="Rhea" id="RHEA-COMP:12909"/>
        <dbReference type="Rhea" id="RHEA-COMP:19908"/>
        <dbReference type="ChEBI" id="CHEBI:15377"/>
        <dbReference type="ChEBI" id="CHEBI:15378"/>
        <dbReference type="ChEBI" id="CHEBI:57792"/>
        <dbReference type="ChEBI" id="CHEBI:62899"/>
        <dbReference type="ChEBI" id="CHEBI:77846"/>
        <dbReference type="ChEBI" id="CHEBI:90778"/>
        <dbReference type="ChEBI" id="CHEBI:232372"/>
        <dbReference type="EC" id="2.8.1.10"/>
    </reaction>
</comment>
<comment type="pathway">
    <text evidence="1">Cofactor biosynthesis; thiamine diphosphate biosynthesis.</text>
</comment>
<comment type="subunit">
    <text evidence="1">Homotetramer. Forms heterodimers with either ThiH or ThiS.</text>
</comment>
<comment type="subcellular location">
    <subcellularLocation>
        <location evidence="1">Cytoplasm</location>
    </subcellularLocation>
</comment>
<comment type="similarity">
    <text evidence="1">Belongs to the ThiG family.</text>
</comment>
<dbReference type="EC" id="2.8.1.10" evidence="1"/>
<dbReference type="EMBL" id="CP000653">
    <property type="protein sequence ID" value="ABP58893.1"/>
    <property type="molecule type" value="Genomic_DNA"/>
</dbReference>
<dbReference type="RefSeq" id="WP_011915467.1">
    <property type="nucleotide sequence ID" value="NC_009436.1"/>
</dbReference>
<dbReference type="SMR" id="A4W5B3"/>
<dbReference type="STRING" id="399742.Ent638_0203"/>
<dbReference type="KEGG" id="ent:Ent638_0203"/>
<dbReference type="eggNOG" id="COG2022">
    <property type="taxonomic scope" value="Bacteria"/>
</dbReference>
<dbReference type="HOGENOM" id="CLU_062233_1_0_6"/>
<dbReference type="OrthoDB" id="9805935at2"/>
<dbReference type="UniPathway" id="UPA00060"/>
<dbReference type="Proteomes" id="UP000000230">
    <property type="component" value="Chromosome"/>
</dbReference>
<dbReference type="GO" id="GO:0005737">
    <property type="term" value="C:cytoplasm"/>
    <property type="evidence" value="ECO:0007669"/>
    <property type="project" value="UniProtKB-SubCell"/>
</dbReference>
<dbReference type="GO" id="GO:1990107">
    <property type="term" value="F:thiazole synthase activity"/>
    <property type="evidence" value="ECO:0007669"/>
    <property type="project" value="UniProtKB-EC"/>
</dbReference>
<dbReference type="GO" id="GO:0009229">
    <property type="term" value="P:thiamine diphosphate biosynthetic process"/>
    <property type="evidence" value="ECO:0007669"/>
    <property type="project" value="UniProtKB-UniRule"/>
</dbReference>
<dbReference type="CDD" id="cd04728">
    <property type="entry name" value="ThiG"/>
    <property type="match status" value="1"/>
</dbReference>
<dbReference type="FunFam" id="3.20.20.70:FF:000049">
    <property type="entry name" value="Thiazole synthase"/>
    <property type="match status" value="1"/>
</dbReference>
<dbReference type="Gene3D" id="3.20.20.70">
    <property type="entry name" value="Aldolase class I"/>
    <property type="match status" value="1"/>
</dbReference>
<dbReference type="HAMAP" id="MF_00443">
    <property type="entry name" value="ThiG"/>
    <property type="match status" value="1"/>
</dbReference>
<dbReference type="InterPro" id="IPR013785">
    <property type="entry name" value="Aldolase_TIM"/>
</dbReference>
<dbReference type="InterPro" id="IPR033983">
    <property type="entry name" value="Thiazole_synthase_ThiG"/>
</dbReference>
<dbReference type="InterPro" id="IPR008867">
    <property type="entry name" value="ThiG"/>
</dbReference>
<dbReference type="PANTHER" id="PTHR34266">
    <property type="entry name" value="THIAZOLE SYNTHASE"/>
    <property type="match status" value="1"/>
</dbReference>
<dbReference type="PANTHER" id="PTHR34266:SF2">
    <property type="entry name" value="THIAZOLE SYNTHASE"/>
    <property type="match status" value="1"/>
</dbReference>
<dbReference type="Pfam" id="PF05690">
    <property type="entry name" value="ThiG"/>
    <property type="match status" value="1"/>
</dbReference>
<dbReference type="SUPFAM" id="SSF110399">
    <property type="entry name" value="ThiG-like"/>
    <property type="match status" value="1"/>
</dbReference>
<sequence length="256" mass="26905">MLCIADKTFDSHLFTGTGKFASPQLMVSAIRESGSQLVTLAMKRVDLRNHNDAILAPLLEAGVTLLPNTSGAKTAEEAIFAAHLAREALGTSWLKLEIHPDARWLMPDPIETLKAAELLVKQGFTVLPYCGADPVLCKRLEEVGCAAVMPLGAPIGSNQGLETRAMLEIIIEQATIPVVVDAGIGVPSHAAQALEMGADAVLVNTAIAVADDPVMMARAFRLAVEAGALARQSGPGSRRAQAQASSPLTGFLEAYS</sequence>
<protein>
    <recommendedName>
        <fullName evidence="1">Thiazole synthase</fullName>
        <ecNumber evidence="1">2.8.1.10</ecNumber>
    </recommendedName>
</protein>
<evidence type="ECO:0000255" key="1">
    <source>
        <dbReference type="HAMAP-Rule" id="MF_00443"/>
    </source>
</evidence>
<name>THIG_ENT38</name>
<organism>
    <name type="scientific">Enterobacter sp. (strain 638)</name>
    <dbReference type="NCBI Taxonomy" id="399742"/>
    <lineage>
        <taxon>Bacteria</taxon>
        <taxon>Pseudomonadati</taxon>
        <taxon>Pseudomonadota</taxon>
        <taxon>Gammaproteobacteria</taxon>
        <taxon>Enterobacterales</taxon>
        <taxon>Enterobacteriaceae</taxon>
        <taxon>Enterobacter</taxon>
    </lineage>
</organism>
<reference key="1">
    <citation type="journal article" date="2010" name="PLoS Genet.">
        <title>Genome sequence of the plant growth promoting endophytic bacterium Enterobacter sp. 638.</title>
        <authorList>
            <person name="Taghavi S."/>
            <person name="van der Lelie D."/>
            <person name="Hoffman A."/>
            <person name="Zhang Y.B."/>
            <person name="Walla M.D."/>
            <person name="Vangronsveld J."/>
            <person name="Newman L."/>
            <person name="Monchy S."/>
        </authorList>
    </citation>
    <scope>NUCLEOTIDE SEQUENCE [LARGE SCALE GENOMIC DNA]</scope>
    <source>
        <strain>638</strain>
    </source>
</reference>
<proteinExistence type="inferred from homology"/>
<keyword id="KW-0963">Cytoplasm</keyword>
<keyword id="KW-0704">Schiff base</keyword>
<keyword id="KW-0784">Thiamine biosynthesis</keyword>
<keyword id="KW-0808">Transferase</keyword>